<reference key="1">
    <citation type="journal article" date="2004" name="Genome Res.">
        <title>Genome sequence of Haloarcula marismortui: a halophilic archaeon from the Dead Sea.</title>
        <authorList>
            <person name="Baliga N.S."/>
            <person name="Bonneau R."/>
            <person name="Facciotti M.T."/>
            <person name="Pan M."/>
            <person name="Glusman G."/>
            <person name="Deutsch E.W."/>
            <person name="Shannon P."/>
            <person name="Chiu Y."/>
            <person name="Weng R.S."/>
            <person name="Gan R.R."/>
            <person name="Hung P."/>
            <person name="Date S.V."/>
            <person name="Marcotte E."/>
            <person name="Hood L."/>
            <person name="Ng W.V."/>
        </authorList>
    </citation>
    <scope>NUCLEOTIDE SEQUENCE [LARGE SCALE GENOMIC DNA]</scope>
    <source>
        <strain>ATCC 43049 / DSM 3752 / JCM 8966 / VKM B-1809</strain>
    </source>
</reference>
<sequence>MERFAAVDDQYDPDAVEDGVFEYWDDVDAYEQTKAHRADGEDYFFVDGPPYTSGAAHMGTTWNKTLKDCYIRYLRMQGYNVTDRPGYDMHGLPIETKVEERLDFENKKDIEQFGEENFIEECKDFAEEQLEGLQTDFQDFGVWMDWDDPYKTVNPEYMEAAWWGFQQAHERDLVEQGQRSINQCPRCETGIANNEVEYHDVGKPSIYVKFPLAEQDGSLVIWTTTPWTIVANTFVAADGDLEYVGVDAEKDGDTERLYLAEACVEDVLKAGRYDDYEVVEELSGEEMVGWAYEHPLAEEVPDHAQGEGSGQVYTADYVEADRTGLVHSAPGHGEEDFERGQELDLEIFCPVGSDGVYTDDAGKYAGTFVRDANDEVIDDLDENGVLLSSEPGHTVREGQCWRCDTDIVRIVTDQWFITVTDIKDELLANIEDSEWYPQWARDNRFRDFVEDAPDWNVSRQRYWGIPIPIWLPEDWSGDMDDAIVVGDREELAERVDQDIDPENVDLHKGTVDDLTITEDSTTYTRVGDVFDVWLDSSVATWGTVNYPEQTEDFEELWPADLIMEAHDQTRGWFWSQLGMSTAATGEIPYKQVLMHGYANMPDGRGMSKSKGVLIDPHEVIEKHGRDPMRLFLLSVTAQGEDMNFSWEETAEMQRRLNILWNVARFPLPYMRADDFDPEETTVEDLRDDLELVDEWVLSRLQSVTEAMTDSMDDFENDKAVDELLEFVVEDVSRFYIQVVRERMWEEEDSASKQAAYATLYRVLESVAALFAPFTPFVAEQVYGALTGDAGHPTVHMCDWPEVDADLHDPALEREIEVVREVEEAGSNARQQAERKLRWPVTRVVVDVDSDDVADAVRAQEAIIADRLNARAVEVVGADDEWGELQYSAEADMSELGPAFGDDAGRVMNALNEARVTEQSLDTLEGTVREALGEDVDLTEEMVEFRRETPEGVTGTEFTALDGGGVVYVDTALTEDIESEGYAREVIRRIQEMRKDLELDIEERIAVDLTIDDERVDSLVREHEALIKEEVRADELDGVEDGHRKTWEVEGTDMEIAIAPCEADQREASEQASGD</sequence>
<accession>Q5UZ84</accession>
<proteinExistence type="inferred from homology"/>
<dbReference type="EC" id="6.1.1.5" evidence="1"/>
<dbReference type="EMBL" id="AY596297">
    <property type="protein sequence ID" value="AAV47419.1"/>
    <property type="molecule type" value="Genomic_DNA"/>
</dbReference>
<dbReference type="RefSeq" id="WP_011224343.1">
    <property type="nucleotide sequence ID" value="NC_006396.1"/>
</dbReference>
<dbReference type="SMR" id="Q5UZ84"/>
<dbReference type="STRING" id="272569.rrnAC2634"/>
<dbReference type="PaxDb" id="272569-rrnAC2634"/>
<dbReference type="EnsemblBacteria" id="AAV47419">
    <property type="protein sequence ID" value="AAV47419"/>
    <property type="gene ID" value="rrnAC2634"/>
</dbReference>
<dbReference type="GeneID" id="40153513"/>
<dbReference type="KEGG" id="hma:rrnAC2634"/>
<dbReference type="PATRIC" id="fig|272569.17.peg.3231"/>
<dbReference type="eggNOG" id="arCOG00807">
    <property type="taxonomic scope" value="Archaea"/>
</dbReference>
<dbReference type="HOGENOM" id="CLU_001493_1_1_2"/>
<dbReference type="Proteomes" id="UP000001169">
    <property type="component" value="Chromosome I"/>
</dbReference>
<dbReference type="GO" id="GO:0005737">
    <property type="term" value="C:cytoplasm"/>
    <property type="evidence" value="ECO:0007669"/>
    <property type="project" value="UniProtKB-SubCell"/>
</dbReference>
<dbReference type="GO" id="GO:0002161">
    <property type="term" value="F:aminoacyl-tRNA deacylase activity"/>
    <property type="evidence" value="ECO:0007669"/>
    <property type="project" value="InterPro"/>
</dbReference>
<dbReference type="GO" id="GO:0005524">
    <property type="term" value="F:ATP binding"/>
    <property type="evidence" value="ECO:0007669"/>
    <property type="project" value="UniProtKB-UniRule"/>
</dbReference>
<dbReference type="GO" id="GO:0004822">
    <property type="term" value="F:isoleucine-tRNA ligase activity"/>
    <property type="evidence" value="ECO:0007669"/>
    <property type="project" value="UniProtKB-UniRule"/>
</dbReference>
<dbReference type="GO" id="GO:0000049">
    <property type="term" value="F:tRNA binding"/>
    <property type="evidence" value="ECO:0007669"/>
    <property type="project" value="InterPro"/>
</dbReference>
<dbReference type="GO" id="GO:0008270">
    <property type="term" value="F:zinc ion binding"/>
    <property type="evidence" value="ECO:0007669"/>
    <property type="project" value="UniProtKB-UniRule"/>
</dbReference>
<dbReference type="GO" id="GO:0006428">
    <property type="term" value="P:isoleucyl-tRNA aminoacylation"/>
    <property type="evidence" value="ECO:0007669"/>
    <property type="project" value="UniProtKB-UniRule"/>
</dbReference>
<dbReference type="CDD" id="cd07961">
    <property type="entry name" value="Anticodon_Ia_Ile_ABEc"/>
    <property type="match status" value="1"/>
</dbReference>
<dbReference type="CDD" id="cd00818">
    <property type="entry name" value="IleRS_core"/>
    <property type="match status" value="1"/>
</dbReference>
<dbReference type="FunFam" id="3.40.50.620:FF:000286">
    <property type="entry name" value="Isoleucine--tRNA ligase"/>
    <property type="match status" value="1"/>
</dbReference>
<dbReference type="Gene3D" id="3.40.50.620">
    <property type="entry name" value="HUPs"/>
    <property type="match status" value="2"/>
</dbReference>
<dbReference type="Gene3D" id="1.10.730.10">
    <property type="entry name" value="Isoleucyl-tRNA Synthetase, Domain 1"/>
    <property type="match status" value="1"/>
</dbReference>
<dbReference type="Gene3D" id="3.90.740.10">
    <property type="entry name" value="Valyl/Leucyl/Isoleucyl-tRNA synthetase, editing domain"/>
    <property type="match status" value="1"/>
</dbReference>
<dbReference type="HAMAP" id="MF_02003">
    <property type="entry name" value="Ile_tRNA_synth_type2"/>
    <property type="match status" value="1"/>
</dbReference>
<dbReference type="InterPro" id="IPR002300">
    <property type="entry name" value="aa-tRNA-synth_Ia"/>
</dbReference>
<dbReference type="InterPro" id="IPR033709">
    <property type="entry name" value="Anticodon_Ile_ABEc"/>
</dbReference>
<dbReference type="InterPro" id="IPR002301">
    <property type="entry name" value="Ile-tRNA-ligase"/>
</dbReference>
<dbReference type="InterPro" id="IPR023586">
    <property type="entry name" value="Ile-tRNA-ligase_type2"/>
</dbReference>
<dbReference type="InterPro" id="IPR013155">
    <property type="entry name" value="M/V/L/I-tRNA-synth_anticd-bd"/>
</dbReference>
<dbReference type="InterPro" id="IPR014729">
    <property type="entry name" value="Rossmann-like_a/b/a_fold"/>
</dbReference>
<dbReference type="InterPro" id="IPR009080">
    <property type="entry name" value="tRNAsynth_Ia_anticodon-bd"/>
</dbReference>
<dbReference type="InterPro" id="IPR009008">
    <property type="entry name" value="Val/Leu/Ile-tRNA-synth_edit"/>
</dbReference>
<dbReference type="NCBIfam" id="TIGR00392">
    <property type="entry name" value="ileS"/>
    <property type="match status" value="1"/>
</dbReference>
<dbReference type="PANTHER" id="PTHR42780:SF1">
    <property type="entry name" value="ISOLEUCINE--TRNA LIGASE, CYTOPLASMIC"/>
    <property type="match status" value="1"/>
</dbReference>
<dbReference type="PANTHER" id="PTHR42780">
    <property type="entry name" value="SOLEUCYL-TRNA SYNTHETASE"/>
    <property type="match status" value="1"/>
</dbReference>
<dbReference type="Pfam" id="PF08264">
    <property type="entry name" value="Anticodon_1"/>
    <property type="match status" value="1"/>
</dbReference>
<dbReference type="Pfam" id="PF19302">
    <property type="entry name" value="DUF5915"/>
    <property type="match status" value="1"/>
</dbReference>
<dbReference type="Pfam" id="PF00133">
    <property type="entry name" value="tRNA-synt_1"/>
    <property type="match status" value="1"/>
</dbReference>
<dbReference type="PRINTS" id="PR00984">
    <property type="entry name" value="TRNASYNTHILE"/>
</dbReference>
<dbReference type="SUPFAM" id="SSF47323">
    <property type="entry name" value="Anticodon-binding domain of a subclass of class I aminoacyl-tRNA synthetases"/>
    <property type="match status" value="2"/>
</dbReference>
<dbReference type="SUPFAM" id="SSF52374">
    <property type="entry name" value="Nucleotidylyl transferase"/>
    <property type="match status" value="1"/>
</dbReference>
<dbReference type="SUPFAM" id="SSF50677">
    <property type="entry name" value="ValRS/IleRS/LeuRS editing domain"/>
    <property type="match status" value="1"/>
</dbReference>
<feature type="chain" id="PRO_0000098576" description="Isoleucine--tRNA ligase">
    <location>
        <begin position="1"/>
        <end position="1074"/>
    </location>
</feature>
<feature type="short sequence motif" description="'HIGH' region">
    <location>
        <begin position="50"/>
        <end position="60"/>
    </location>
</feature>
<feature type="short sequence motif" description="'KMSKS' region">
    <location>
        <begin position="605"/>
        <end position="609"/>
    </location>
</feature>
<feature type="binding site" evidence="1">
    <location>
        <position position="608"/>
    </location>
    <ligand>
        <name>ATP</name>
        <dbReference type="ChEBI" id="CHEBI:30616"/>
    </ligand>
</feature>
<keyword id="KW-0030">Aminoacyl-tRNA synthetase</keyword>
<keyword id="KW-0067">ATP-binding</keyword>
<keyword id="KW-0963">Cytoplasm</keyword>
<keyword id="KW-0436">Ligase</keyword>
<keyword id="KW-0479">Metal-binding</keyword>
<keyword id="KW-0547">Nucleotide-binding</keyword>
<keyword id="KW-0648">Protein biosynthesis</keyword>
<keyword id="KW-1185">Reference proteome</keyword>
<keyword id="KW-0862">Zinc</keyword>
<name>SYI_HALMA</name>
<comment type="function">
    <text evidence="1">Catalyzes the attachment of isoleucine to tRNA(Ile). As IleRS can inadvertently accommodate and process structurally similar amino acids such as valine, to avoid such errors it has two additional distinct tRNA(Ile)-dependent editing activities. One activity is designated as 'pretransfer' editing and involves the hydrolysis of activated Val-AMP. The other activity is designated 'posttransfer' editing and involves deacylation of mischarged Val-tRNA(Ile).</text>
</comment>
<comment type="catalytic activity">
    <reaction evidence="1">
        <text>tRNA(Ile) + L-isoleucine + ATP = L-isoleucyl-tRNA(Ile) + AMP + diphosphate</text>
        <dbReference type="Rhea" id="RHEA:11060"/>
        <dbReference type="Rhea" id="RHEA-COMP:9666"/>
        <dbReference type="Rhea" id="RHEA-COMP:9695"/>
        <dbReference type="ChEBI" id="CHEBI:30616"/>
        <dbReference type="ChEBI" id="CHEBI:33019"/>
        <dbReference type="ChEBI" id="CHEBI:58045"/>
        <dbReference type="ChEBI" id="CHEBI:78442"/>
        <dbReference type="ChEBI" id="CHEBI:78528"/>
        <dbReference type="ChEBI" id="CHEBI:456215"/>
        <dbReference type="EC" id="6.1.1.5"/>
    </reaction>
</comment>
<comment type="cofactor">
    <cofactor evidence="1">
        <name>Zn(2+)</name>
        <dbReference type="ChEBI" id="CHEBI:29105"/>
    </cofactor>
</comment>
<comment type="subunit">
    <text evidence="1">Monomer.</text>
</comment>
<comment type="subcellular location">
    <subcellularLocation>
        <location evidence="1">Cytoplasm</location>
    </subcellularLocation>
</comment>
<comment type="domain">
    <text evidence="1">IleRS has two distinct active sites: one for aminoacylation and one for editing. The misactivated valine is translocated from the active site to the editing site, which sterically excludes the correctly activated isoleucine. The single editing site contains two valyl binding pockets, one specific for each substrate (Val-AMP or Val-tRNA(Ile)).</text>
</comment>
<comment type="similarity">
    <text evidence="1">Belongs to the class-I aminoacyl-tRNA synthetase family. IleS type 2 subfamily.</text>
</comment>
<protein>
    <recommendedName>
        <fullName evidence="1">Isoleucine--tRNA ligase</fullName>
        <ecNumber evidence="1">6.1.1.5</ecNumber>
    </recommendedName>
    <alternativeName>
        <fullName evidence="1">Isoleucyl-tRNA synthetase</fullName>
        <shortName evidence="1">IleRS</shortName>
    </alternativeName>
</protein>
<evidence type="ECO:0000255" key="1">
    <source>
        <dbReference type="HAMAP-Rule" id="MF_02003"/>
    </source>
</evidence>
<gene>
    <name evidence="1" type="primary">ileS</name>
    <name type="ordered locus">rrnAC2634</name>
</gene>
<organism>
    <name type="scientific">Haloarcula marismortui (strain ATCC 43049 / DSM 3752 / JCM 8966 / VKM B-1809)</name>
    <name type="common">Halobacterium marismortui</name>
    <dbReference type="NCBI Taxonomy" id="272569"/>
    <lineage>
        <taxon>Archaea</taxon>
        <taxon>Methanobacteriati</taxon>
        <taxon>Methanobacteriota</taxon>
        <taxon>Stenosarchaea group</taxon>
        <taxon>Halobacteria</taxon>
        <taxon>Halobacteriales</taxon>
        <taxon>Haloarculaceae</taxon>
        <taxon>Haloarcula</taxon>
    </lineage>
</organism>